<accession>B3QYE2</accession>
<protein>
    <recommendedName>
        <fullName evidence="1">Large ribosomal subunit protein uL30</fullName>
    </recommendedName>
    <alternativeName>
        <fullName evidence="2">50S ribosomal protein L30</fullName>
    </alternativeName>
</protein>
<name>RL30_CHLT3</name>
<evidence type="ECO:0000255" key="1">
    <source>
        <dbReference type="HAMAP-Rule" id="MF_01371"/>
    </source>
</evidence>
<evidence type="ECO:0000305" key="2"/>
<dbReference type="EMBL" id="CP001100">
    <property type="protein sequence ID" value="ACF13570.1"/>
    <property type="molecule type" value="Genomic_DNA"/>
</dbReference>
<dbReference type="RefSeq" id="WP_012499654.1">
    <property type="nucleotide sequence ID" value="NC_011026.1"/>
</dbReference>
<dbReference type="SMR" id="B3QYE2"/>
<dbReference type="STRING" id="517418.Ctha_1106"/>
<dbReference type="KEGG" id="cts:Ctha_1106"/>
<dbReference type="eggNOG" id="COG1841">
    <property type="taxonomic scope" value="Bacteria"/>
</dbReference>
<dbReference type="HOGENOM" id="CLU_131047_2_0_10"/>
<dbReference type="OrthoDB" id="9812790at2"/>
<dbReference type="Proteomes" id="UP000001208">
    <property type="component" value="Chromosome"/>
</dbReference>
<dbReference type="GO" id="GO:0022625">
    <property type="term" value="C:cytosolic large ribosomal subunit"/>
    <property type="evidence" value="ECO:0007669"/>
    <property type="project" value="TreeGrafter"/>
</dbReference>
<dbReference type="GO" id="GO:0003735">
    <property type="term" value="F:structural constituent of ribosome"/>
    <property type="evidence" value="ECO:0007669"/>
    <property type="project" value="InterPro"/>
</dbReference>
<dbReference type="GO" id="GO:0006412">
    <property type="term" value="P:translation"/>
    <property type="evidence" value="ECO:0007669"/>
    <property type="project" value="UniProtKB-UniRule"/>
</dbReference>
<dbReference type="CDD" id="cd01658">
    <property type="entry name" value="Ribosomal_L30"/>
    <property type="match status" value="1"/>
</dbReference>
<dbReference type="Gene3D" id="3.30.1390.20">
    <property type="entry name" value="Ribosomal protein L30, ferredoxin-like fold domain"/>
    <property type="match status" value="1"/>
</dbReference>
<dbReference type="HAMAP" id="MF_01371_B">
    <property type="entry name" value="Ribosomal_uL30_B"/>
    <property type="match status" value="1"/>
</dbReference>
<dbReference type="InterPro" id="IPR036919">
    <property type="entry name" value="Ribo_uL30_ferredoxin-like_sf"/>
</dbReference>
<dbReference type="InterPro" id="IPR005996">
    <property type="entry name" value="Ribosomal_uL30_bac-type"/>
</dbReference>
<dbReference type="InterPro" id="IPR016082">
    <property type="entry name" value="Ribosomal_uL30_ferredoxin-like"/>
</dbReference>
<dbReference type="NCBIfam" id="TIGR01308">
    <property type="entry name" value="rpmD_bact"/>
    <property type="match status" value="1"/>
</dbReference>
<dbReference type="PANTHER" id="PTHR15892:SF2">
    <property type="entry name" value="LARGE RIBOSOMAL SUBUNIT PROTEIN UL30M"/>
    <property type="match status" value="1"/>
</dbReference>
<dbReference type="PANTHER" id="PTHR15892">
    <property type="entry name" value="MITOCHONDRIAL RIBOSOMAL PROTEIN L30"/>
    <property type="match status" value="1"/>
</dbReference>
<dbReference type="Pfam" id="PF00327">
    <property type="entry name" value="Ribosomal_L30"/>
    <property type="match status" value="1"/>
</dbReference>
<dbReference type="PIRSF" id="PIRSF002211">
    <property type="entry name" value="Ribosomal_L30_bac-type"/>
    <property type="match status" value="1"/>
</dbReference>
<dbReference type="SUPFAM" id="SSF55129">
    <property type="entry name" value="Ribosomal protein L30p/L7e"/>
    <property type="match status" value="1"/>
</dbReference>
<feature type="chain" id="PRO_1000144663" description="Large ribosomal subunit protein uL30">
    <location>
        <begin position="1"/>
        <end position="66"/>
    </location>
</feature>
<keyword id="KW-1185">Reference proteome</keyword>
<keyword id="KW-0687">Ribonucleoprotein</keyword>
<keyword id="KW-0689">Ribosomal protein</keyword>
<gene>
    <name evidence="1" type="primary">rpmD</name>
    <name type="ordered locus">Ctha_1106</name>
</gene>
<organism>
    <name type="scientific">Chloroherpeton thalassium (strain ATCC 35110 / GB-78)</name>
    <dbReference type="NCBI Taxonomy" id="517418"/>
    <lineage>
        <taxon>Bacteria</taxon>
        <taxon>Pseudomonadati</taxon>
        <taxon>Chlorobiota</taxon>
        <taxon>Chlorobiia</taxon>
        <taxon>Chlorobiales</taxon>
        <taxon>Chloroherpetonaceae</taxon>
        <taxon>Chloroherpeton</taxon>
    </lineage>
</organism>
<comment type="subunit">
    <text evidence="1">Part of the 50S ribosomal subunit.</text>
</comment>
<comment type="similarity">
    <text evidence="1">Belongs to the universal ribosomal protein uL30 family.</text>
</comment>
<reference key="1">
    <citation type="submission" date="2008-06" db="EMBL/GenBank/DDBJ databases">
        <title>Complete sequence of Chloroherpeton thalassium ATCC 35110.</title>
        <authorList>
            <consortium name="US DOE Joint Genome Institute"/>
            <person name="Lucas S."/>
            <person name="Copeland A."/>
            <person name="Lapidus A."/>
            <person name="Glavina del Rio T."/>
            <person name="Dalin E."/>
            <person name="Tice H."/>
            <person name="Bruce D."/>
            <person name="Goodwin L."/>
            <person name="Pitluck S."/>
            <person name="Schmutz J."/>
            <person name="Larimer F."/>
            <person name="Land M."/>
            <person name="Hauser L."/>
            <person name="Kyrpides N."/>
            <person name="Mikhailova N."/>
            <person name="Liu Z."/>
            <person name="Li T."/>
            <person name="Zhao F."/>
            <person name="Overmann J."/>
            <person name="Bryant D.A."/>
            <person name="Richardson P."/>
        </authorList>
    </citation>
    <scope>NUCLEOTIDE SEQUENCE [LARGE SCALE GENOMIC DNA]</scope>
    <source>
        <strain>ATCC 35110 / GB-78</strain>
    </source>
</reference>
<proteinExistence type="inferred from homology"/>
<sequence length="66" mass="7470">MSETSNKKLKITQYRSIIGCSKKQKATIKCLGLGRPNYSRVLNDNPLLQGQLRVVQHLVKVEEVSE</sequence>